<organism>
    <name type="scientific">Listeria monocytogenes serovar 1/2a (strain ATCC BAA-679 / EGD-e)</name>
    <dbReference type="NCBI Taxonomy" id="169963"/>
    <lineage>
        <taxon>Bacteria</taxon>
        <taxon>Bacillati</taxon>
        <taxon>Bacillota</taxon>
        <taxon>Bacilli</taxon>
        <taxon>Bacillales</taxon>
        <taxon>Listeriaceae</taxon>
        <taxon>Listeria</taxon>
    </lineage>
</organism>
<evidence type="ECO:0000255" key="1">
    <source>
        <dbReference type="HAMAP-Rule" id="MF_01307"/>
    </source>
</evidence>
<evidence type="ECO:0000305" key="2"/>
<feature type="chain" id="PRO_0000131540" description="Small ribosomal subunit protein uS5">
    <location>
        <begin position="1"/>
        <end position="167"/>
    </location>
</feature>
<feature type="domain" description="S5 DRBM" evidence="1">
    <location>
        <begin position="12"/>
        <end position="75"/>
    </location>
</feature>
<name>RS5_LISMO</name>
<keyword id="KW-0002">3D-structure</keyword>
<keyword id="KW-1185">Reference proteome</keyword>
<keyword id="KW-0687">Ribonucleoprotein</keyword>
<keyword id="KW-0689">Ribosomal protein</keyword>
<keyword id="KW-0694">RNA-binding</keyword>
<keyword id="KW-0699">rRNA-binding</keyword>
<comment type="function">
    <text evidence="1">With S4 and S12 plays an important role in translational accuracy.</text>
</comment>
<comment type="function">
    <text evidence="1">Located at the back of the 30S subunit body where it stabilizes the conformation of the head with respect to the body.</text>
</comment>
<comment type="subunit">
    <text evidence="1">Part of the 30S ribosomal subunit. Contacts proteins S4 and S8.</text>
</comment>
<comment type="domain">
    <text>The N-terminal domain interacts with the head of the 30S subunit; the C-terminal domain interacts with the body and contacts protein S4. The interaction surface between S4 and S5 is involved in control of translational fidelity.</text>
</comment>
<comment type="similarity">
    <text evidence="1">Belongs to the universal ribosomal protein uS5 family.</text>
</comment>
<reference key="1">
    <citation type="journal article" date="2001" name="Science">
        <title>Comparative genomics of Listeria species.</title>
        <authorList>
            <person name="Glaser P."/>
            <person name="Frangeul L."/>
            <person name="Buchrieser C."/>
            <person name="Rusniok C."/>
            <person name="Amend A."/>
            <person name="Baquero F."/>
            <person name="Berche P."/>
            <person name="Bloecker H."/>
            <person name="Brandt P."/>
            <person name="Chakraborty T."/>
            <person name="Charbit A."/>
            <person name="Chetouani F."/>
            <person name="Couve E."/>
            <person name="de Daruvar A."/>
            <person name="Dehoux P."/>
            <person name="Domann E."/>
            <person name="Dominguez-Bernal G."/>
            <person name="Duchaud E."/>
            <person name="Durant L."/>
            <person name="Dussurget O."/>
            <person name="Entian K.-D."/>
            <person name="Fsihi H."/>
            <person name="Garcia-del Portillo F."/>
            <person name="Garrido P."/>
            <person name="Gautier L."/>
            <person name="Goebel W."/>
            <person name="Gomez-Lopez N."/>
            <person name="Hain T."/>
            <person name="Hauf J."/>
            <person name="Jackson D."/>
            <person name="Jones L.-M."/>
            <person name="Kaerst U."/>
            <person name="Kreft J."/>
            <person name="Kuhn M."/>
            <person name="Kunst F."/>
            <person name="Kurapkat G."/>
            <person name="Madueno E."/>
            <person name="Maitournam A."/>
            <person name="Mata Vicente J."/>
            <person name="Ng E."/>
            <person name="Nedjari H."/>
            <person name="Nordsiek G."/>
            <person name="Novella S."/>
            <person name="de Pablos B."/>
            <person name="Perez-Diaz J.-C."/>
            <person name="Purcell R."/>
            <person name="Remmel B."/>
            <person name="Rose M."/>
            <person name="Schlueter T."/>
            <person name="Simoes N."/>
            <person name="Tierrez A."/>
            <person name="Vazquez-Boland J.-A."/>
            <person name="Voss H."/>
            <person name="Wehland J."/>
            <person name="Cossart P."/>
        </authorList>
    </citation>
    <scope>NUCLEOTIDE SEQUENCE [LARGE SCALE GENOMIC DNA]</scope>
    <source>
        <strain>ATCC BAA-679 / EGD-e</strain>
    </source>
</reference>
<protein>
    <recommendedName>
        <fullName evidence="1">Small ribosomal subunit protein uS5</fullName>
    </recommendedName>
    <alternativeName>
        <fullName evidence="2">30S ribosomal protein S5</fullName>
    </alternativeName>
</protein>
<dbReference type="EMBL" id="AL591983">
    <property type="protein sequence ID" value="CAD00693.1"/>
    <property type="molecule type" value="Genomic_DNA"/>
</dbReference>
<dbReference type="PIR" id="AG1401">
    <property type="entry name" value="AG1401"/>
</dbReference>
<dbReference type="RefSeq" id="NP_466138.1">
    <property type="nucleotide sequence ID" value="NC_003210.1"/>
</dbReference>
<dbReference type="RefSeq" id="WP_003723681.1">
    <property type="nucleotide sequence ID" value="NZ_CP149495.1"/>
</dbReference>
<dbReference type="PDB" id="7NHN">
    <property type="method" value="EM"/>
    <property type="resolution" value="2.90 A"/>
    <property type="chains" value="f=1-167"/>
</dbReference>
<dbReference type="PDBsum" id="7NHN"/>
<dbReference type="EMDB" id="EMD-12334"/>
<dbReference type="SMR" id="Q8Y446"/>
<dbReference type="STRING" id="169963.gene:17595333"/>
<dbReference type="PaxDb" id="169963-lmo2615"/>
<dbReference type="EnsemblBacteria" id="CAD00693">
    <property type="protein sequence ID" value="CAD00693"/>
    <property type="gene ID" value="CAD00693"/>
</dbReference>
<dbReference type="GeneID" id="93240496"/>
<dbReference type="GeneID" id="987198"/>
<dbReference type="KEGG" id="lmo:lmo2615"/>
<dbReference type="PATRIC" id="fig|169963.11.peg.2679"/>
<dbReference type="eggNOG" id="COG0098">
    <property type="taxonomic scope" value="Bacteria"/>
</dbReference>
<dbReference type="HOGENOM" id="CLU_065898_2_2_9"/>
<dbReference type="OrthoDB" id="9809045at2"/>
<dbReference type="PhylomeDB" id="Q8Y446"/>
<dbReference type="BioCyc" id="LMON169963:LMO2615-MONOMER"/>
<dbReference type="Proteomes" id="UP000000817">
    <property type="component" value="Chromosome"/>
</dbReference>
<dbReference type="GO" id="GO:0022627">
    <property type="term" value="C:cytosolic small ribosomal subunit"/>
    <property type="evidence" value="ECO:0000318"/>
    <property type="project" value="GO_Central"/>
</dbReference>
<dbReference type="GO" id="GO:0019843">
    <property type="term" value="F:rRNA binding"/>
    <property type="evidence" value="ECO:0007669"/>
    <property type="project" value="UniProtKB-UniRule"/>
</dbReference>
<dbReference type="GO" id="GO:0003735">
    <property type="term" value="F:structural constituent of ribosome"/>
    <property type="evidence" value="ECO:0000318"/>
    <property type="project" value="GO_Central"/>
</dbReference>
<dbReference type="GO" id="GO:0006412">
    <property type="term" value="P:translation"/>
    <property type="evidence" value="ECO:0000318"/>
    <property type="project" value="GO_Central"/>
</dbReference>
<dbReference type="FunFam" id="3.30.160.20:FF:000001">
    <property type="entry name" value="30S ribosomal protein S5"/>
    <property type="match status" value="1"/>
</dbReference>
<dbReference type="FunFam" id="3.30.230.10:FF:000002">
    <property type="entry name" value="30S ribosomal protein S5"/>
    <property type="match status" value="1"/>
</dbReference>
<dbReference type="Gene3D" id="3.30.160.20">
    <property type="match status" value="1"/>
</dbReference>
<dbReference type="Gene3D" id="3.30.230.10">
    <property type="match status" value="1"/>
</dbReference>
<dbReference type="HAMAP" id="MF_01307_B">
    <property type="entry name" value="Ribosomal_uS5_B"/>
    <property type="match status" value="1"/>
</dbReference>
<dbReference type="InterPro" id="IPR020568">
    <property type="entry name" value="Ribosomal_Su5_D2-typ_SF"/>
</dbReference>
<dbReference type="InterPro" id="IPR000851">
    <property type="entry name" value="Ribosomal_uS5"/>
</dbReference>
<dbReference type="InterPro" id="IPR005712">
    <property type="entry name" value="Ribosomal_uS5_bac-type"/>
</dbReference>
<dbReference type="InterPro" id="IPR005324">
    <property type="entry name" value="Ribosomal_uS5_C"/>
</dbReference>
<dbReference type="InterPro" id="IPR013810">
    <property type="entry name" value="Ribosomal_uS5_N"/>
</dbReference>
<dbReference type="InterPro" id="IPR018192">
    <property type="entry name" value="Ribosomal_uS5_N_CS"/>
</dbReference>
<dbReference type="InterPro" id="IPR014721">
    <property type="entry name" value="Ribsml_uS5_D2-typ_fold_subgr"/>
</dbReference>
<dbReference type="NCBIfam" id="TIGR01021">
    <property type="entry name" value="rpsE_bact"/>
    <property type="match status" value="1"/>
</dbReference>
<dbReference type="PANTHER" id="PTHR48277">
    <property type="entry name" value="MITOCHONDRIAL RIBOSOMAL PROTEIN S5"/>
    <property type="match status" value="1"/>
</dbReference>
<dbReference type="PANTHER" id="PTHR48277:SF1">
    <property type="entry name" value="MITOCHONDRIAL RIBOSOMAL PROTEIN S5"/>
    <property type="match status" value="1"/>
</dbReference>
<dbReference type="Pfam" id="PF00333">
    <property type="entry name" value="Ribosomal_S5"/>
    <property type="match status" value="1"/>
</dbReference>
<dbReference type="Pfam" id="PF03719">
    <property type="entry name" value="Ribosomal_S5_C"/>
    <property type="match status" value="1"/>
</dbReference>
<dbReference type="SUPFAM" id="SSF54768">
    <property type="entry name" value="dsRNA-binding domain-like"/>
    <property type="match status" value="1"/>
</dbReference>
<dbReference type="SUPFAM" id="SSF54211">
    <property type="entry name" value="Ribosomal protein S5 domain 2-like"/>
    <property type="match status" value="1"/>
</dbReference>
<dbReference type="PROSITE" id="PS00585">
    <property type="entry name" value="RIBOSOMAL_S5"/>
    <property type="match status" value="1"/>
</dbReference>
<dbReference type="PROSITE" id="PS50881">
    <property type="entry name" value="S5_DSRBD"/>
    <property type="match status" value="1"/>
</dbReference>
<sequence length="167" mass="17456">MPEQIDGNKLDLEERVVTINRVAKVVKGGRRFRFTALVVVGDKNGHVGFGTGKAQEVPDAIRKAVEDAKKNMVLVPTVDTTIPHTVVGHFGGGEILLKPASAGSGVTAGGPVRAVLELAGVADVSSKSLGSNTPINMVRATIDGIKQLKNAEDVAKLRGKTVEELLG</sequence>
<gene>
    <name evidence="1" type="primary">rpsE</name>
    <name type="ordered locus">lmo2615</name>
</gene>
<proteinExistence type="evidence at protein level"/>
<accession>Q8Y446</accession>